<reference key="1">
    <citation type="journal article" date="1985" name="Proc. Natl. Acad. Sci. U.S.A.">
        <title>Complete nucleotide sequence of an infectious clone of human T-cell leukemia virus type II: an open reading frame for the protease gene.</title>
        <authorList>
            <person name="Shimotohno K."/>
            <person name="Takahashi Y."/>
            <person name="Shimizu N."/>
            <person name="Gojobori T."/>
            <person name="Golde D.W."/>
            <person name="Chen I.S.Y."/>
            <person name="Miwa M."/>
            <person name="Sugimura T."/>
        </authorList>
    </citation>
    <scope>NUCLEOTIDE SEQUENCE [GENOMIC DNA]</scope>
</reference>
<reference key="2">
    <citation type="journal article" date="1984" name="Science">
        <title>Sequence of the envelope glycoprotein gene of type II human T lymphotropic virus.</title>
        <authorList>
            <person name="Sodroski J."/>
            <person name="Patarca R."/>
            <person name="Perkins D."/>
            <person name="Briggs D."/>
            <person name="Lee T.-H."/>
            <person name="Essex M."/>
            <person name="Coligan J."/>
            <person name="Wong-Staal F."/>
            <person name="Gallo R.C."/>
            <person name="Haseltine W.A."/>
        </authorList>
    </citation>
    <scope>NUCLEOTIDE SEQUENCE [GENOMIC RNA]</scope>
</reference>
<reference key="3">
    <citation type="journal article" date="2002" name="AIDS Res. Hum. Retroviruses">
        <title>Processing of the HTLV-II envelope precursor glycoprotein gp62 by furin is essential for cell fusion activity.</title>
        <authorList>
            <person name="Hasegawa H."/>
            <person name="Tatsumi M."/>
            <person name="Ogawa-Goto K."/>
            <person name="Takahashi H."/>
            <person name="Kojima A."/>
            <person name="Iwasaki T."/>
            <person name="Kurata T."/>
            <person name="Sata T."/>
            <person name="Takeuchi T."/>
            <person name="Sheehy N."/>
            <person name="Sawa H."/>
            <person name="Nagashima K."/>
            <person name="Hall W.W."/>
        </authorList>
    </citation>
    <scope>PROTEOLYTIC PROCESSING OF POLYPROTEIN BY FURIN</scope>
</reference>
<sequence>MGNVFFLLLFSLTHFPLAQQSRCTLTIGISSYHSSPCSPTQPVCTWNLDLNSLTTDQRLHPPCPNLITYSGFHKTYSLYLFPHWIKKPNRQGLGYYSPSYNDPCSLQCPYLGCQAWTSAYTGPVSSPSWKFHSDVNFTQEVSQVSLRLHFSKCGSSMTLLVDAPGYDPLWFITSEPTQPPPTSPPLVHDSDLEHVLTPSTSWTTKILKFIQLTLQSTNYSCMVCVDRSSLSSWHVLYTPNISIPQQTSSRTILFPSLALPAPPSQPFPWTHCYQPRLQAITTDNCNNSIILPPFSLAPVPPPATRRRRAVPIAVWLVSALAAGTGIAGGVTGSLSLASSKSLLLEVDKDISHLTQAIVKNHQNILRVAQYAAQNRRGLDLLFWEQGGLCKAIQEQCCFLNISNTHVSVLQERPPLEKRVITGWGLNWDLGLSQWAREALQTGITILALLLLVILFGPCILRQIQALPQRLQNRHNQYSLINPETML</sequence>
<feature type="signal peptide" evidence="2">
    <location>
        <begin position="1"/>
        <end position="18"/>
    </location>
</feature>
<feature type="chain" id="PRO_0000239544" description="Envelope glycoprotein gp63">
    <location>
        <begin position="19"/>
        <end position="486"/>
    </location>
</feature>
<feature type="chain" id="PRO_0000038761" description="Surface protein" evidence="1">
    <location>
        <begin position="19"/>
        <end position="308"/>
    </location>
</feature>
<feature type="chain" id="PRO_0000038762" description="Transmembrane protein" evidence="1">
    <location>
        <begin position="309"/>
        <end position="486"/>
    </location>
</feature>
<feature type="topological domain" description="Extracellular" evidence="2">
    <location>
        <begin position="19"/>
        <end position="438"/>
    </location>
</feature>
<feature type="transmembrane region" description="Helical" evidence="2">
    <location>
        <begin position="439"/>
        <end position="459"/>
    </location>
</feature>
<feature type="topological domain" description="Cytoplasmic" evidence="2">
    <location>
        <begin position="460"/>
        <end position="486"/>
    </location>
</feature>
<feature type="region of interest" description="Fusion peptide" evidence="2">
    <location>
        <begin position="309"/>
        <end position="329"/>
    </location>
</feature>
<feature type="region of interest" description="Immunosuppression" evidence="1">
    <location>
        <begin position="372"/>
        <end position="388"/>
    </location>
</feature>
<feature type="coiled-coil region" evidence="2">
    <location>
        <begin position="337"/>
        <end position="383"/>
    </location>
</feature>
<feature type="coiled-coil region" evidence="2">
    <location>
        <begin position="393"/>
        <end position="425"/>
    </location>
</feature>
<feature type="short sequence motif" description="CXXC">
    <location>
        <begin position="221"/>
        <end position="224"/>
    </location>
</feature>
<feature type="short sequence motif" description="CX6CC">
    <location>
        <begin position="389"/>
        <end position="397"/>
    </location>
</feature>
<feature type="site" description="Cleavage; by host furin">
    <location>
        <begin position="308"/>
        <end position="309"/>
    </location>
</feature>
<feature type="lipid moiety-binding region" description="S-palmitoyl cysteine; by host" evidence="1">
    <location>
        <position position="458"/>
    </location>
</feature>
<feature type="glycosylation site" description="N-linked (GlcNAc...) asparagine; by host" evidence="2">
    <location>
        <position position="136"/>
    </location>
</feature>
<feature type="glycosylation site" description="N-linked (GlcNAc...) asparagine; by host" evidence="2">
    <location>
        <position position="218"/>
    </location>
</feature>
<feature type="glycosylation site" description="N-linked (GlcNAc...) asparagine; by host" evidence="2">
    <location>
        <position position="240"/>
    </location>
</feature>
<feature type="glycosylation site" description="N-linked (GlcNAc...) asparagine; by host" evidence="2">
    <location>
        <position position="286"/>
    </location>
</feature>
<feature type="glycosylation site" description="N-linked (GlcNAc...) asparagine; by host" evidence="2">
    <location>
        <position position="400"/>
    </location>
</feature>
<feature type="disulfide bond" description="Interchain (between SU and TM chains, or C-224 with C-397); in linked form" evidence="1">
    <location>
        <begin position="221"/>
        <end position="397"/>
    </location>
</feature>
<feature type="disulfide bond" evidence="1">
    <location>
        <begin position="221"/>
        <end position="224"/>
    </location>
</feature>
<feature type="disulfide bond" evidence="1">
    <location>
        <begin position="389"/>
        <end position="396"/>
    </location>
</feature>
<feature type="sequence conflict" description="In Ref. 2; AAA45410." evidence="3" ref="2">
    <original>I</original>
    <variation>V</variation>
    <location>
        <position position="27"/>
    </location>
</feature>
<feature type="sequence conflict" description="In Ref. 2; AAA45410." evidence="3" ref="2">
    <original>D</original>
    <variation>H</variation>
    <location>
        <position position="56"/>
    </location>
</feature>
<feature type="sequence conflict" description="In Ref. 2; AAA45410." evidence="3" ref="2">
    <original>A</original>
    <variation>S</variation>
    <location>
        <position position="115"/>
    </location>
</feature>
<feature type="sequence conflict" description="In Ref. 2; AAA45410." evidence="3" ref="2">
    <original>SA</original>
    <variation>CP</variation>
    <location>
        <begin position="118"/>
        <end position="119"/>
    </location>
</feature>
<feature type="sequence conflict" description="In Ref. 2." evidence="3" ref="2">
    <original>F</original>
    <variation>P</variation>
    <location>
        <position position="267"/>
    </location>
</feature>
<feature type="sequence conflict" description="In Ref. 2; AAA45410." evidence="3" ref="2">
    <original>P</original>
    <variation>L</variation>
    <location>
        <position position="302"/>
    </location>
</feature>
<feature type="sequence conflict" description="In Ref. 2; AAA45410." evidence="3" ref="2">
    <original>S</original>
    <variation>P</variation>
    <location>
        <position position="318"/>
    </location>
</feature>
<name>ENV_HTLV2</name>
<dbReference type="EMBL" id="M10060">
    <property type="protein sequence ID" value="AAB59887.1"/>
    <property type="molecule type" value="Genomic_DNA"/>
</dbReference>
<dbReference type="EMBL" id="K02024">
    <property type="protein sequence ID" value="AAA45410.1"/>
    <property type="molecule type" value="Genomic_RNA"/>
</dbReference>
<dbReference type="PIR" id="A03980">
    <property type="entry name" value="VCLJT2"/>
</dbReference>
<dbReference type="PIR" id="A03981">
    <property type="entry name" value="VCLJH2"/>
</dbReference>
<dbReference type="RefSeq" id="NP_041006.1">
    <property type="nucleotide sequence ID" value="NC_001488.1"/>
</dbReference>
<dbReference type="SMR" id="P03383"/>
<dbReference type="ELM" id="P03383"/>
<dbReference type="IntAct" id="P03383">
    <property type="interactions" value="1"/>
</dbReference>
<dbReference type="MINT" id="P03383"/>
<dbReference type="GlyCosmos" id="P03383">
    <property type="glycosylation" value="5 sites, No reported glycans"/>
</dbReference>
<dbReference type="KEGG" id="vg:1491942"/>
<dbReference type="OrthoDB" id="4817at10239"/>
<dbReference type="Proteomes" id="UP000009254">
    <property type="component" value="Genome"/>
</dbReference>
<dbReference type="GO" id="GO:0020002">
    <property type="term" value="C:host cell plasma membrane"/>
    <property type="evidence" value="ECO:0007669"/>
    <property type="project" value="UniProtKB-SubCell"/>
</dbReference>
<dbReference type="GO" id="GO:0016020">
    <property type="term" value="C:membrane"/>
    <property type="evidence" value="ECO:0007669"/>
    <property type="project" value="UniProtKB-KW"/>
</dbReference>
<dbReference type="GO" id="GO:0019031">
    <property type="term" value="C:viral envelope"/>
    <property type="evidence" value="ECO:0007669"/>
    <property type="project" value="UniProtKB-KW"/>
</dbReference>
<dbReference type="GO" id="GO:0055036">
    <property type="term" value="C:virion membrane"/>
    <property type="evidence" value="ECO:0007669"/>
    <property type="project" value="UniProtKB-SubCell"/>
</dbReference>
<dbReference type="GO" id="GO:0019064">
    <property type="term" value="P:fusion of virus membrane with host plasma membrane"/>
    <property type="evidence" value="ECO:0007669"/>
    <property type="project" value="UniProtKB-KW"/>
</dbReference>
<dbReference type="GO" id="GO:0046718">
    <property type="term" value="P:symbiont entry into host cell"/>
    <property type="evidence" value="ECO:0007669"/>
    <property type="project" value="UniProtKB-KW"/>
</dbReference>
<dbReference type="GO" id="GO:0019062">
    <property type="term" value="P:virion attachment to host cell"/>
    <property type="evidence" value="ECO:0007669"/>
    <property type="project" value="UniProtKB-KW"/>
</dbReference>
<dbReference type="CDD" id="cd09851">
    <property type="entry name" value="HTLV-1-like_HR1-HR2"/>
    <property type="match status" value="1"/>
</dbReference>
<dbReference type="Gene3D" id="1.10.287.210">
    <property type="match status" value="1"/>
</dbReference>
<dbReference type="InterPro" id="IPR018154">
    <property type="entry name" value="TLV/ENV_coat_polyprotein"/>
</dbReference>
<dbReference type="PANTHER" id="PTHR10424:SF81">
    <property type="entry name" value="ERVV2 PROTEIN"/>
    <property type="match status" value="1"/>
</dbReference>
<dbReference type="PANTHER" id="PTHR10424">
    <property type="entry name" value="VIRAL ENVELOPE PROTEIN"/>
    <property type="match status" value="1"/>
</dbReference>
<dbReference type="Pfam" id="PF00429">
    <property type="entry name" value="TLV_coat"/>
    <property type="match status" value="2"/>
</dbReference>
<dbReference type="SUPFAM" id="SSF58069">
    <property type="entry name" value="Virus ectodomain"/>
    <property type="match status" value="1"/>
</dbReference>
<organismHost>
    <name type="scientific">Homo sapiens</name>
    <name type="common">Human</name>
    <dbReference type="NCBI Taxonomy" id="9606"/>
</organismHost>
<protein>
    <recommendedName>
        <fullName>Envelope glycoprotein gp63</fullName>
    </recommendedName>
    <alternativeName>
        <fullName>Env polyprotein</fullName>
    </alternativeName>
    <component>
        <recommendedName>
            <fullName>Surface protein</fullName>
            <shortName>SU</shortName>
        </recommendedName>
        <alternativeName>
            <fullName>Glycoprotein 46</fullName>
            <shortName>gp46</shortName>
        </alternativeName>
    </component>
    <component>
        <recommendedName>
            <fullName>Transmembrane protein</fullName>
            <shortName>TM</shortName>
        </recommendedName>
        <alternativeName>
            <fullName>Glycoprotein 21</fullName>
            <shortName>gp21</shortName>
        </alternativeName>
    </component>
</protein>
<accession>P03383</accession>
<accession>P03382</accession>
<keyword id="KW-0165">Cleavage on pair of basic residues</keyword>
<keyword id="KW-0175">Coiled coil</keyword>
<keyword id="KW-1015">Disulfide bond</keyword>
<keyword id="KW-1169">Fusion of virus membrane with host cell membrane</keyword>
<keyword id="KW-1168">Fusion of virus membrane with host membrane</keyword>
<keyword id="KW-0325">Glycoprotein</keyword>
<keyword id="KW-1032">Host cell membrane</keyword>
<keyword id="KW-1043">Host membrane</keyword>
<keyword id="KW-0945">Host-virus interaction</keyword>
<keyword id="KW-0449">Lipoprotein</keyword>
<keyword id="KW-0472">Membrane</keyword>
<keyword id="KW-0564">Palmitate</keyword>
<keyword id="KW-1185">Reference proteome</keyword>
<keyword id="KW-0732">Signal</keyword>
<keyword id="KW-0812">Transmembrane</keyword>
<keyword id="KW-1133">Transmembrane helix</keyword>
<keyword id="KW-1161">Viral attachment to host cell</keyword>
<keyword id="KW-0261">Viral envelope protein</keyword>
<keyword id="KW-1162">Viral penetration into host cytoplasm</keyword>
<keyword id="KW-0946">Virion</keyword>
<keyword id="KW-1160">Virus entry into host cell</keyword>
<comment type="function">
    <text evidence="1">The surface protein (SU) attaches the virus to the host cell by binding to its receptor. This interaction triggers the refolding of the transmembrane protein (TM) and is thought to activate its fusogenic potential by unmasking its fusion peptide. Fusion occurs at the host cell plasma membrane (By similarity).</text>
</comment>
<comment type="function">
    <text evidence="1">The transmembrane protein (TM) acts as a class I viral fusion protein. Under the current model, the protein has at least 3 conformational states: pre-fusion native state, pre-hairpin intermediate state, and post-fusion hairpin state. During viral and target cell membrane fusion, the coiled coil regions (heptad repeats) assume a trimer-of-hairpins structure, positioning the fusion peptide in close proximity to the C-terminal region of the ectodomain. The formation of this structure appears to drive apposition and subsequent fusion of viral and target cell membranes. Membranes fusion leads to delivery of the nucleocapsid into the cytoplasm (By similarity).</text>
</comment>
<comment type="subunit">
    <text evidence="1">The mature envelope protein (Env) consists of a trimer of SU-TM heterodimers attached by a labile interchain disulfide bond.</text>
</comment>
<comment type="interaction">
    <interactant intactId="EBI-9676086">
        <id>P03383</id>
    </interactant>
    <interactant intactId="EBI-394632">
        <id>O43513</id>
        <label>MED7</label>
    </interactant>
    <organismsDiffer>true</organismsDiffer>
    <experiments>3</experiments>
</comment>
<comment type="subcellular location">
    <molecule>Transmembrane protein</molecule>
    <subcellularLocation>
        <location evidence="1">Virion membrane</location>
        <topology evidence="1">Single-pass type I membrane protein</topology>
    </subcellularLocation>
    <subcellularLocation>
        <location evidence="1">Host cell membrane</location>
        <topology evidence="1">Single-pass type I membrane protein</topology>
    </subcellularLocation>
    <text evidence="1">It is probably concentrated at the site of budding and incorporated into the virions possibly by contacts between the cytoplasmic tail of Env and the N-terminus of Gag.</text>
</comment>
<comment type="subcellular location">
    <molecule>Surface protein</molecule>
    <subcellularLocation>
        <location evidence="1">Virion membrane</location>
        <topology evidence="1">Peripheral membrane protein</topology>
    </subcellularLocation>
    <subcellularLocation>
        <location evidence="1">Host cell membrane</location>
        <topology evidence="1">Peripheral membrane protein</topology>
    </subcellularLocation>
    <text evidence="1">The surface protein is not anchored to the viral envelope, but associates with the extravirion surface through its binding to TM. It is probably concentrated at the site of budding and incorporated into the virions possibly by contacts between the cytoplasmic tail of Env and the N-terminus of Gag (By similarity).</text>
</comment>
<comment type="domain">
    <text evidence="1">The 17 amino acids long immunosuppressive region is present in many retroviral envelope proteins. Synthetic peptides derived from this relatively conserved sequence inhibit immune function in vitro and in vivo (By similarity).</text>
</comment>
<comment type="PTM">
    <text evidence="1">Specific enzymatic cleavages in vivo yield mature proteins. Envelope glycoproteins are synthesized as an inactive precursor that is N-glycosylated and processed likely by host cell furin or by a furin-like protease in the Golgi to yield the mature SU and TM proteins. The cleavage site between SU and TM requires the minimal sequence [KR]-X-[KR]-R (By similarity).</text>
</comment>
<comment type="PTM">
    <text evidence="1">The CXXC motif is highly conserved across a broad range of retroviral envelope proteins. It is thought to participate in the formation of a labile disulfide bond possibly with the CX6CC motif present in the transmembrane protein. Isomerization of the intersubunit disulfide bond to an SU intrachain disulfide bond is thought to occur upon receptor recognition in order to allow membrane fusion (By similarity).</text>
</comment>
<comment type="PTM">
    <text evidence="1">The transmembrane protein is palmitoylated.</text>
</comment>
<evidence type="ECO:0000250" key="1"/>
<evidence type="ECO:0000255" key="2"/>
<evidence type="ECO:0000305" key="3"/>
<proteinExistence type="evidence at protein level"/>
<gene>
    <name type="primary">env</name>
</gene>
<organism>
    <name type="scientific">Human T-cell leukemia virus 2</name>
    <name type="common">HTLV-2</name>
    <dbReference type="NCBI Taxonomy" id="11909"/>
    <lineage>
        <taxon>Viruses</taxon>
        <taxon>Riboviria</taxon>
        <taxon>Pararnavirae</taxon>
        <taxon>Artverviricota</taxon>
        <taxon>Revtraviricetes</taxon>
        <taxon>Ortervirales</taxon>
        <taxon>Retroviridae</taxon>
        <taxon>Orthoretrovirinae</taxon>
        <taxon>Deltaretrovirus</taxon>
        <taxon>Primate T-lymphotropic virus 2</taxon>
    </lineage>
</organism>